<dbReference type="EC" id="2.1.1.182" evidence="1"/>
<dbReference type="EMBL" id="CP000103">
    <property type="protein sequence ID" value="ABB73826.1"/>
    <property type="molecule type" value="Genomic_DNA"/>
</dbReference>
<dbReference type="RefSeq" id="WP_011379880.1">
    <property type="nucleotide sequence ID" value="NC_007614.1"/>
</dbReference>
<dbReference type="SMR" id="Q2YBP5"/>
<dbReference type="STRING" id="323848.Nmul_A0518"/>
<dbReference type="KEGG" id="nmu:Nmul_A0518"/>
<dbReference type="eggNOG" id="COG0030">
    <property type="taxonomic scope" value="Bacteria"/>
</dbReference>
<dbReference type="HOGENOM" id="CLU_041220_0_1_4"/>
<dbReference type="OrthoDB" id="9814755at2"/>
<dbReference type="Proteomes" id="UP000002718">
    <property type="component" value="Chromosome"/>
</dbReference>
<dbReference type="GO" id="GO:0005829">
    <property type="term" value="C:cytosol"/>
    <property type="evidence" value="ECO:0007669"/>
    <property type="project" value="TreeGrafter"/>
</dbReference>
<dbReference type="GO" id="GO:0052908">
    <property type="term" value="F:16S rRNA (adenine(1518)-N(6)/adenine(1519)-N(6))-dimethyltransferase activity"/>
    <property type="evidence" value="ECO:0007669"/>
    <property type="project" value="UniProtKB-EC"/>
</dbReference>
<dbReference type="GO" id="GO:0003723">
    <property type="term" value="F:RNA binding"/>
    <property type="evidence" value="ECO:0007669"/>
    <property type="project" value="UniProtKB-KW"/>
</dbReference>
<dbReference type="CDD" id="cd02440">
    <property type="entry name" value="AdoMet_MTases"/>
    <property type="match status" value="1"/>
</dbReference>
<dbReference type="FunFam" id="1.10.8.100:FF:000001">
    <property type="entry name" value="Ribosomal RNA small subunit methyltransferase A"/>
    <property type="match status" value="1"/>
</dbReference>
<dbReference type="Gene3D" id="1.10.8.100">
    <property type="entry name" value="Ribosomal RNA adenine dimethylase-like, domain 2"/>
    <property type="match status" value="1"/>
</dbReference>
<dbReference type="Gene3D" id="3.40.50.150">
    <property type="entry name" value="Vaccinia Virus protein VP39"/>
    <property type="match status" value="1"/>
</dbReference>
<dbReference type="HAMAP" id="MF_00607">
    <property type="entry name" value="16SrRNA_methyltr_A"/>
    <property type="match status" value="1"/>
</dbReference>
<dbReference type="InterPro" id="IPR001737">
    <property type="entry name" value="KsgA/Erm"/>
</dbReference>
<dbReference type="InterPro" id="IPR023165">
    <property type="entry name" value="rRNA_Ade_diMease-like_C"/>
</dbReference>
<dbReference type="InterPro" id="IPR020596">
    <property type="entry name" value="rRNA_Ade_Mease_Trfase_CS"/>
</dbReference>
<dbReference type="InterPro" id="IPR020598">
    <property type="entry name" value="rRNA_Ade_methylase_Trfase_N"/>
</dbReference>
<dbReference type="InterPro" id="IPR011530">
    <property type="entry name" value="rRNA_adenine_dimethylase"/>
</dbReference>
<dbReference type="InterPro" id="IPR029063">
    <property type="entry name" value="SAM-dependent_MTases_sf"/>
</dbReference>
<dbReference type="NCBIfam" id="TIGR00755">
    <property type="entry name" value="ksgA"/>
    <property type="match status" value="1"/>
</dbReference>
<dbReference type="PANTHER" id="PTHR11727">
    <property type="entry name" value="DIMETHYLADENOSINE TRANSFERASE"/>
    <property type="match status" value="1"/>
</dbReference>
<dbReference type="PANTHER" id="PTHR11727:SF7">
    <property type="entry name" value="DIMETHYLADENOSINE TRANSFERASE-RELATED"/>
    <property type="match status" value="1"/>
</dbReference>
<dbReference type="Pfam" id="PF00398">
    <property type="entry name" value="RrnaAD"/>
    <property type="match status" value="1"/>
</dbReference>
<dbReference type="SMART" id="SM00650">
    <property type="entry name" value="rADc"/>
    <property type="match status" value="1"/>
</dbReference>
<dbReference type="SUPFAM" id="SSF53335">
    <property type="entry name" value="S-adenosyl-L-methionine-dependent methyltransferases"/>
    <property type="match status" value="1"/>
</dbReference>
<dbReference type="PROSITE" id="PS01131">
    <property type="entry name" value="RRNA_A_DIMETH"/>
    <property type="match status" value="1"/>
</dbReference>
<dbReference type="PROSITE" id="PS51689">
    <property type="entry name" value="SAM_RNA_A_N6_MT"/>
    <property type="match status" value="1"/>
</dbReference>
<organism>
    <name type="scientific">Nitrosospira multiformis (strain ATCC 25196 / NCIMB 11849 / C 71)</name>
    <dbReference type="NCBI Taxonomy" id="323848"/>
    <lineage>
        <taxon>Bacteria</taxon>
        <taxon>Pseudomonadati</taxon>
        <taxon>Pseudomonadota</taxon>
        <taxon>Betaproteobacteria</taxon>
        <taxon>Nitrosomonadales</taxon>
        <taxon>Nitrosomonadaceae</taxon>
        <taxon>Nitrosospira</taxon>
    </lineage>
</organism>
<comment type="function">
    <text evidence="1">Specifically dimethylates two adjacent adenosines (A1518 and A1519) in the loop of a conserved hairpin near the 3'-end of 16S rRNA in the 30S particle. May play a critical role in biogenesis of 30S subunits.</text>
</comment>
<comment type="catalytic activity">
    <reaction evidence="1">
        <text>adenosine(1518)/adenosine(1519) in 16S rRNA + 4 S-adenosyl-L-methionine = N(6)-dimethyladenosine(1518)/N(6)-dimethyladenosine(1519) in 16S rRNA + 4 S-adenosyl-L-homocysteine + 4 H(+)</text>
        <dbReference type="Rhea" id="RHEA:19609"/>
        <dbReference type="Rhea" id="RHEA-COMP:10232"/>
        <dbReference type="Rhea" id="RHEA-COMP:10233"/>
        <dbReference type="ChEBI" id="CHEBI:15378"/>
        <dbReference type="ChEBI" id="CHEBI:57856"/>
        <dbReference type="ChEBI" id="CHEBI:59789"/>
        <dbReference type="ChEBI" id="CHEBI:74411"/>
        <dbReference type="ChEBI" id="CHEBI:74493"/>
        <dbReference type="EC" id="2.1.1.182"/>
    </reaction>
</comment>
<comment type="subcellular location">
    <subcellularLocation>
        <location evidence="1">Cytoplasm</location>
    </subcellularLocation>
</comment>
<comment type="similarity">
    <text evidence="1">Belongs to the class I-like SAM-binding methyltransferase superfamily. rRNA adenine N(6)-methyltransferase family. RsmA subfamily.</text>
</comment>
<feature type="chain" id="PRO_0000257311" description="Ribosomal RNA small subunit methyltransferase A">
    <location>
        <begin position="1"/>
        <end position="259"/>
    </location>
</feature>
<feature type="binding site" evidence="1">
    <location>
        <position position="12"/>
    </location>
    <ligand>
        <name>S-adenosyl-L-methionine</name>
        <dbReference type="ChEBI" id="CHEBI:59789"/>
    </ligand>
</feature>
<feature type="binding site" evidence="1">
    <location>
        <position position="14"/>
    </location>
    <ligand>
        <name>S-adenosyl-L-methionine</name>
        <dbReference type="ChEBI" id="CHEBI:59789"/>
    </ligand>
</feature>
<feature type="binding site" evidence="1">
    <location>
        <position position="39"/>
    </location>
    <ligand>
        <name>S-adenosyl-L-methionine</name>
        <dbReference type="ChEBI" id="CHEBI:59789"/>
    </ligand>
</feature>
<feature type="binding site" evidence="1">
    <location>
        <position position="60"/>
    </location>
    <ligand>
        <name>S-adenosyl-L-methionine</name>
        <dbReference type="ChEBI" id="CHEBI:59789"/>
    </ligand>
</feature>
<feature type="binding site" evidence="1">
    <location>
        <position position="84"/>
    </location>
    <ligand>
        <name>S-adenosyl-L-methionine</name>
        <dbReference type="ChEBI" id="CHEBI:59789"/>
    </ligand>
</feature>
<feature type="binding site" evidence="1">
    <location>
        <position position="102"/>
    </location>
    <ligand>
        <name>S-adenosyl-L-methionine</name>
        <dbReference type="ChEBI" id="CHEBI:59789"/>
    </ligand>
</feature>
<accession>Q2YBP5</accession>
<protein>
    <recommendedName>
        <fullName evidence="1">Ribosomal RNA small subunit methyltransferase A</fullName>
        <ecNumber evidence="1">2.1.1.182</ecNumber>
    </recommendedName>
    <alternativeName>
        <fullName evidence="1">16S rRNA (adenine(1518)-N(6)/adenine(1519)-N(6))-dimethyltransferase</fullName>
    </alternativeName>
    <alternativeName>
        <fullName evidence="1">16S rRNA dimethyladenosine transferase</fullName>
    </alternativeName>
    <alternativeName>
        <fullName evidence="1">16S rRNA dimethylase</fullName>
    </alternativeName>
    <alternativeName>
        <fullName evidence="1">S-adenosylmethionine-6-N', N'-adenosyl(rRNA) dimethyltransferase</fullName>
    </alternativeName>
</protein>
<gene>
    <name evidence="1" type="primary">rsmA</name>
    <name evidence="1" type="synonym">ksgA</name>
    <name type="ordered locus">Nmul_A0518</name>
</gene>
<sequence length="259" mass="29779">MQHTPRRRFGQNFLVDSQTVTDIVHALHPRREDVMVEIGPGLGALTQPLLQSLEHLHVVEIDRDIVKRLRNEFSAKRLTVHEGDALEFDFSSLGESLRVVGNLPYNISTPLLFHLSRFTDHLRDMHFMLQKEVVARMVAKPSTSDYGRLSVMLQCRFEMEQLFIVPPECFHPPPKVQSAVVRMIPLKKPLIEASQEKLFAEIVSAAFSQRRKILRNTLRDYLTGEDYLKLGIDSNLRAENLSITQYVAITNYFNRVRSG</sequence>
<name>RSMA_NITMU</name>
<evidence type="ECO:0000255" key="1">
    <source>
        <dbReference type="HAMAP-Rule" id="MF_00607"/>
    </source>
</evidence>
<reference key="1">
    <citation type="submission" date="2005-08" db="EMBL/GenBank/DDBJ databases">
        <title>Complete sequence of chromosome 1 of Nitrosospira multiformis ATCC 25196.</title>
        <authorList>
            <person name="Copeland A."/>
            <person name="Lucas S."/>
            <person name="Lapidus A."/>
            <person name="Barry K."/>
            <person name="Detter J.C."/>
            <person name="Glavina T."/>
            <person name="Hammon N."/>
            <person name="Israni S."/>
            <person name="Pitluck S."/>
            <person name="Chain P."/>
            <person name="Malfatti S."/>
            <person name="Shin M."/>
            <person name="Vergez L."/>
            <person name="Schmutz J."/>
            <person name="Larimer F."/>
            <person name="Land M."/>
            <person name="Hauser L."/>
            <person name="Kyrpides N."/>
            <person name="Lykidis A."/>
            <person name="Richardson P."/>
        </authorList>
    </citation>
    <scope>NUCLEOTIDE SEQUENCE [LARGE SCALE GENOMIC DNA]</scope>
    <source>
        <strain>ATCC 25196 / NCIMB 11849 / C 71</strain>
    </source>
</reference>
<keyword id="KW-0963">Cytoplasm</keyword>
<keyword id="KW-0489">Methyltransferase</keyword>
<keyword id="KW-1185">Reference proteome</keyword>
<keyword id="KW-0694">RNA-binding</keyword>
<keyword id="KW-0698">rRNA processing</keyword>
<keyword id="KW-0949">S-adenosyl-L-methionine</keyword>
<keyword id="KW-0808">Transferase</keyword>
<proteinExistence type="inferred from homology"/>